<name>ACSF1_NOSS1</name>
<organism>
    <name type="scientific">Nostoc sp. (strain PCC 7120 / SAG 25.82 / UTEX 2576)</name>
    <dbReference type="NCBI Taxonomy" id="103690"/>
    <lineage>
        <taxon>Bacteria</taxon>
        <taxon>Bacillati</taxon>
        <taxon>Cyanobacteriota</taxon>
        <taxon>Cyanophyceae</taxon>
        <taxon>Nostocales</taxon>
        <taxon>Nostocaceae</taxon>
        <taxon>Nostoc</taxon>
    </lineage>
</organism>
<proteinExistence type="inferred from homology"/>
<protein>
    <recommendedName>
        <fullName evidence="1">Magnesium-protoporphyrin IX monomethyl ester [oxidative] cyclase 1</fullName>
        <shortName evidence="1">Mg-protoporphyrin IX monomethyl ester oxidative cyclase 1</shortName>
        <ecNumber evidence="1">1.14.13.81</ecNumber>
    </recommendedName>
</protein>
<reference key="1">
    <citation type="journal article" date="2001" name="DNA Res.">
        <title>Complete genomic sequence of the filamentous nitrogen-fixing cyanobacterium Anabaena sp. strain PCC 7120.</title>
        <authorList>
            <person name="Kaneko T."/>
            <person name="Nakamura Y."/>
            <person name="Wolk C.P."/>
            <person name="Kuritz T."/>
            <person name="Sasamoto S."/>
            <person name="Watanabe A."/>
            <person name="Iriguchi M."/>
            <person name="Ishikawa A."/>
            <person name="Kawashima K."/>
            <person name="Kimura T."/>
            <person name="Kishida Y."/>
            <person name="Kohara M."/>
            <person name="Matsumoto M."/>
            <person name="Matsuno A."/>
            <person name="Muraki A."/>
            <person name="Nakazaki N."/>
            <person name="Shimpo S."/>
            <person name="Sugimoto M."/>
            <person name="Takazawa M."/>
            <person name="Yamada M."/>
            <person name="Yasuda M."/>
            <person name="Tabata S."/>
        </authorList>
    </citation>
    <scope>NUCLEOTIDE SEQUENCE [LARGE SCALE GENOMIC DNA]</scope>
    <source>
        <strain>PCC 7120 / SAG 25.82 / UTEX 2576</strain>
    </source>
</reference>
<sequence length="351" mass="41422">MVNTLPKPGIKTPSKETVLTPRFYTTDFETAANLDLSAQENELQAMLAEMRADYNRHHFVRDEAFEQSWEHIDGEARQAFIEYLERSCISEFSGFLLFKELSRKLKNRSPVLAEMFQLMARDEARHAGFLNKAMGDFKLSLDLATVTKTRTYTFFPIEWVLYTVYLSEKIGYWRYIIIFRHLEKHPENQFYPIFRYFESWCQDENRHGDIFKALLRSQPQLWNNWKARLWSRFFLLSVFATHTLTVHERSGFYKSLGLDATDFDLQVVRNTNETAGRAFPVMLNTEHPKFFPLLQRCAGYNLNISEIERSSQPKFVKLIRKLPLIAAIVWNLLMVYLIKPIDTEALRETVR</sequence>
<dbReference type="EC" id="1.14.13.81" evidence="1"/>
<dbReference type="EMBL" id="BA000019">
    <property type="protein sequence ID" value="BAB73315.1"/>
    <property type="molecule type" value="Genomic_DNA"/>
</dbReference>
<dbReference type="PIR" id="AC1976">
    <property type="entry name" value="AC1976"/>
</dbReference>
<dbReference type="STRING" id="103690.gene:10493373"/>
<dbReference type="KEGG" id="ana:alr1358"/>
<dbReference type="eggNOG" id="COG1633">
    <property type="taxonomic scope" value="Bacteria"/>
</dbReference>
<dbReference type="OrthoDB" id="141643at2"/>
<dbReference type="UniPathway" id="UPA00670"/>
<dbReference type="Proteomes" id="UP000002483">
    <property type="component" value="Chromosome"/>
</dbReference>
<dbReference type="GO" id="GO:0005506">
    <property type="term" value="F:iron ion binding"/>
    <property type="evidence" value="ECO:0007669"/>
    <property type="project" value="UniProtKB-UniRule"/>
</dbReference>
<dbReference type="GO" id="GO:0048529">
    <property type="term" value="F:magnesium-protoporphyrin IX monomethyl ester (oxidative) cyclase activity"/>
    <property type="evidence" value="ECO:0007669"/>
    <property type="project" value="UniProtKB-UniRule"/>
</dbReference>
<dbReference type="GO" id="GO:0036068">
    <property type="term" value="P:light-independent chlorophyll biosynthetic process"/>
    <property type="evidence" value="ECO:0007669"/>
    <property type="project" value="UniProtKB-UniRule"/>
</dbReference>
<dbReference type="GO" id="GO:0015979">
    <property type="term" value="P:photosynthesis"/>
    <property type="evidence" value="ECO:0007669"/>
    <property type="project" value="UniProtKB-UniRule"/>
</dbReference>
<dbReference type="CDD" id="cd01047">
    <property type="entry name" value="ACSF"/>
    <property type="match status" value="1"/>
</dbReference>
<dbReference type="HAMAP" id="MF_01840">
    <property type="entry name" value="AcsF"/>
    <property type="match status" value="1"/>
</dbReference>
<dbReference type="InterPro" id="IPR008434">
    <property type="entry name" value="AcsF"/>
</dbReference>
<dbReference type="InterPro" id="IPR009078">
    <property type="entry name" value="Ferritin-like_SF"/>
</dbReference>
<dbReference type="InterPro" id="IPR003251">
    <property type="entry name" value="Rr_diiron-bd_dom"/>
</dbReference>
<dbReference type="NCBIfam" id="TIGR02029">
    <property type="entry name" value="AcsF"/>
    <property type="match status" value="1"/>
</dbReference>
<dbReference type="NCBIfam" id="NF010172">
    <property type="entry name" value="PRK13654.1"/>
    <property type="match status" value="1"/>
</dbReference>
<dbReference type="PANTHER" id="PTHR31053">
    <property type="entry name" value="MAGNESIUM-PROTOPORPHYRIN IX MONOMETHYL ESTER [OXIDATIVE] CYCLASE, CHLOROPLASTIC"/>
    <property type="match status" value="1"/>
</dbReference>
<dbReference type="PANTHER" id="PTHR31053:SF2">
    <property type="entry name" value="MAGNESIUM-PROTOPORPHYRIN IX MONOMETHYL ESTER [OXIDATIVE] CYCLASE, CHLOROPLASTIC"/>
    <property type="match status" value="1"/>
</dbReference>
<dbReference type="Pfam" id="PF02915">
    <property type="entry name" value="Rubrerythrin"/>
    <property type="match status" value="1"/>
</dbReference>
<dbReference type="SUPFAM" id="SSF47240">
    <property type="entry name" value="Ferritin-like"/>
    <property type="match status" value="1"/>
</dbReference>
<keyword id="KW-0149">Chlorophyll biosynthesis</keyword>
<keyword id="KW-0408">Iron</keyword>
<keyword id="KW-0479">Metal-binding</keyword>
<keyword id="KW-0521">NADP</keyword>
<keyword id="KW-0560">Oxidoreductase</keyword>
<keyword id="KW-0602">Photosynthesis</keyword>
<keyword id="KW-1185">Reference proteome</keyword>
<gene>
    <name evidence="1" type="primary">acsF1</name>
    <name type="ordered locus">alr1358</name>
</gene>
<comment type="function">
    <text evidence="1">Catalyzes the formation of the isocyclic ring in chlorophyll biosynthesis. Mediates the cyclase reaction, which results in the formation of divinylprotochlorophyllide (Pchlide) characteristic of all chlorophylls from magnesium-protoporphyrin IX 13-monomethyl ester (MgPMME).</text>
</comment>
<comment type="catalytic activity">
    <reaction evidence="1">
        <text>Mg-protoporphyrin IX 13-monomethyl ester + 3 NADPH + 3 O2 + 2 H(+) = 3,8-divinyl protochlorophyllide a + 3 NADP(+) + 5 H2O</text>
        <dbReference type="Rhea" id="RHEA:33235"/>
        <dbReference type="ChEBI" id="CHEBI:15377"/>
        <dbReference type="ChEBI" id="CHEBI:15378"/>
        <dbReference type="ChEBI" id="CHEBI:15379"/>
        <dbReference type="ChEBI" id="CHEBI:57783"/>
        <dbReference type="ChEBI" id="CHEBI:58349"/>
        <dbReference type="ChEBI" id="CHEBI:58632"/>
        <dbReference type="ChEBI" id="CHEBI:60491"/>
        <dbReference type="EC" id="1.14.13.81"/>
    </reaction>
</comment>
<comment type="cofactor">
    <cofactor evidence="1">
        <name>Fe cation</name>
        <dbReference type="ChEBI" id="CHEBI:24875"/>
    </cofactor>
</comment>
<comment type="pathway">
    <text evidence="1">Porphyrin-containing compound metabolism; chlorophyll biosynthesis (light-independent).</text>
</comment>
<comment type="similarity">
    <text evidence="1">Belongs to the AcsF family.</text>
</comment>
<feature type="chain" id="PRO_0000217526" description="Magnesium-protoporphyrin IX monomethyl ester [oxidative] cyclase 1">
    <location>
        <begin position="1"/>
        <end position="351"/>
    </location>
</feature>
<accession>Q8YX57</accession>
<evidence type="ECO:0000255" key="1">
    <source>
        <dbReference type="HAMAP-Rule" id="MF_01840"/>
    </source>
</evidence>